<organism>
    <name type="scientific">Escherichia coli (strain K12)</name>
    <dbReference type="NCBI Taxonomy" id="83333"/>
    <lineage>
        <taxon>Bacteria</taxon>
        <taxon>Pseudomonadati</taxon>
        <taxon>Pseudomonadota</taxon>
        <taxon>Gammaproteobacteria</taxon>
        <taxon>Enterobacterales</taxon>
        <taxon>Enterobacteriaceae</taxon>
        <taxon>Escherichia</taxon>
    </lineage>
</organism>
<comment type="catalytic activity">
    <reaction evidence="1">
        <text>2-formamido-N(1)-(5-O-phospho-beta-D-ribosyl)acetamidine + ATP = 5-amino-1-(5-phospho-beta-D-ribosyl)imidazole + ADP + phosphate + H(+)</text>
        <dbReference type="Rhea" id="RHEA:23032"/>
        <dbReference type="ChEBI" id="CHEBI:15378"/>
        <dbReference type="ChEBI" id="CHEBI:30616"/>
        <dbReference type="ChEBI" id="CHEBI:43474"/>
        <dbReference type="ChEBI" id="CHEBI:137981"/>
        <dbReference type="ChEBI" id="CHEBI:147287"/>
        <dbReference type="ChEBI" id="CHEBI:456216"/>
        <dbReference type="EC" id="6.3.3.1"/>
    </reaction>
</comment>
<comment type="pathway">
    <text evidence="4">Purine metabolism; IMP biosynthesis via de novo pathway; 5-amino-1-(5-phospho-D-ribosyl)imidazole from N(2)-formyl-N(1)-(5-phospho-D-ribosyl)glycinamide: step 2/2.</text>
</comment>
<comment type="subunit">
    <text evidence="1">Homodimer.</text>
</comment>
<comment type="subcellular location">
    <subcellularLocation>
        <location>Cytoplasm</location>
    </subcellularLocation>
</comment>
<comment type="similarity">
    <text evidence="3">Belongs to the AIR synthase family.</text>
</comment>
<reference key="1">
    <citation type="journal article" date="1986" name="J. Biol. Chem.">
        <title>Nucleotide sequence of the purM gene encoding 5'-phosphoribosyl-5-aminoimidazole synthetase of Escherichia coli K12.</title>
        <authorList>
            <person name="Smith J.M."/>
            <person name="Daum H.A. III"/>
        </authorList>
    </citation>
    <scope>NUCLEOTIDE SEQUENCE [GENOMIC DNA]</scope>
    <source>
        <strain>K12</strain>
    </source>
</reference>
<reference key="2">
    <citation type="journal article" date="1997" name="DNA Res.">
        <title>Construction of a contiguous 874-kb sequence of the Escherichia coli-K12 genome corresponding to 50.0-68.8 min on the linkage map and analysis of its sequence features.</title>
        <authorList>
            <person name="Yamamoto Y."/>
            <person name="Aiba H."/>
            <person name="Baba T."/>
            <person name="Hayashi K."/>
            <person name="Inada T."/>
            <person name="Isono K."/>
            <person name="Itoh T."/>
            <person name="Kimura S."/>
            <person name="Kitagawa M."/>
            <person name="Makino K."/>
            <person name="Miki T."/>
            <person name="Mitsuhashi N."/>
            <person name="Mizobuchi K."/>
            <person name="Mori H."/>
            <person name="Nakade S."/>
            <person name="Nakamura Y."/>
            <person name="Nashimoto H."/>
            <person name="Oshima T."/>
            <person name="Oyama S."/>
            <person name="Saito N."/>
            <person name="Sampei G."/>
            <person name="Satoh Y."/>
            <person name="Sivasundaram S."/>
            <person name="Tagami H."/>
            <person name="Takahashi H."/>
            <person name="Takeda J."/>
            <person name="Takemoto K."/>
            <person name="Uehara K."/>
            <person name="Wada C."/>
            <person name="Yamagata S."/>
            <person name="Horiuchi T."/>
        </authorList>
    </citation>
    <scope>NUCLEOTIDE SEQUENCE [LARGE SCALE GENOMIC DNA]</scope>
    <source>
        <strain>K12 / W3110 / ATCC 27325 / DSM 5911</strain>
    </source>
</reference>
<reference key="3">
    <citation type="journal article" date="1997" name="Science">
        <title>The complete genome sequence of Escherichia coli K-12.</title>
        <authorList>
            <person name="Blattner F.R."/>
            <person name="Plunkett G. III"/>
            <person name="Bloch C.A."/>
            <person name="Perna N.T."/>
            <person name="Burland V."/>
            <person name="Riley M."/>
            <person name="Collado-Vides J."/>
            <person name="Glasner J.D."/>
            <person name="Rode C.K."/>
            <person name="Mayhew G.F."/>
            <person name="Gregor J."/>
            <person name="Davis N.W."/>
            <person name="Kirkpatrick H.A."/>
            <person name="Goeden M.A."/>
            <person name="Rose D.J."/>
            <person name="Mau B."/>
            <person name="Shao Y."/>
        </authorList>
    </citation>
    <scope>NUCLEOTIDE SEQUENCE [LARGE SCALE GENOMIC DNA]</scope>
    <source>
        <strain>K12 / MG1655 / ATCC 47076</strain>
    </source>
</reference>
<reference key="4">
    <citation type="journal article" date="2006" name="Mol. Syst. Biol.">
        <title>Highly accurate genome sequences of Escherichia coli K-12 strains MG1655 and W3110.</title>
        <authorList>
            <person name="Hayashi K."/>
            <person name="Morooka N."/>
            <person name="Yamamoto Y."/>
            <person name="Fujita K."/>
            <person name="Isono K."/>
            <person name="Choi S."/>
            <person name="Ohtsubo E."/>
            <person name="Baba T."/>
            <person name="Wanner B.L."/>
            <person name="Mori H."/>
            <person name="Horiuchi T."/>
        </authorList>
    </citation>
    <scope>NUCLEOTIDE SEQUENCE [LARGE SCALE GENOMIC DNA]</scope>
    <source>
        <strain>K12 / W3110 / ATCC 27325 / DSM 5911</strain>
    </source>
</reference>
<reference key="5">
    <citation type="journal article" date="1986" name="Biochemistry">
        <title>Purification and characterization of aminoimidazole ribonucleotide synthetase from Escherichia coli.</title>
        <authorList>
            <person name="Schrimsher J.L."/>
            <person name="Schendel F.J."/>
            <person name="Stubbe J."/>
            <person name="Smith J.M."/>
        </authorList>
    </citation>
    <scope>PARTIAL PROTEIN SEQUENCE</scope>
    <scope>CHARACTERIZATION</scope>
    <scope>CATALYTIC ACTIVITY</scope>
</reference>
<reference key="6">
    <citation type="journal article" date="1997" name="Electrophoresis">
        <title>Comparing the predicted and observed properties of proteins encoded in the genome of Escherichia coli K-12.</title>
        <authorList>
            <person name="Link A.J."/>
            <person name="Robison K."/>
            <person name="Church G.M."/>
        </authorList>
    </citation>
    <scope>PROTEIN SEQUENCE OF 2-12</scope>
    <source>
        <strain>K12 / EMG2</strain>
    </source>
</reference>
<reference key="7">
    <citation type="journal article" date="1999" name="Structure">
        <title>X-ray crystal structure of aminoimidazole ribonucleotide synthetase (PurM), from the Escherichia coli purine biosynthetic pathway at 2.5-A resolution.</title>
        <authorList>
            <person name="Li C."/>
            <person name="Kappock T.J."/>
            <person name="Stubbe J."/>
            <person name="Weaver T.M."/>
            <person name="Ealick S.E."/>
        </authorList>
    </citation>
    <scope>X-RAY CRYSTALLOGRAPHY (2.5 ANGSTROMS)</scope>
</reference>
<keyword id="KW-0002">3D-structure</keyword>
<keyword id="KW-0067">ATP-binding</keyword>
<keyword id="KW-0963">Cytoplasm</keyword>
<keyword id="KW-0903">Direct protein sequencing</keyword>
<keyword id="KW-0436">Ligase</keyword>
<keyword id="KW-0547">Nucleotide-binding</keyword>
<keyword id="KW-0658">Purine biosynthesis</keyword>
<keyword id="KW-1185">Reference proteome</keyword>
<protein>
    <recommendedName>
        <fullName>Phosphoribosylformylglycinamidine cyclo-ligase</fullName>
        <ecNumber evidence="1">6.3.3.1</ecNumber>
    </recommendedName>
    <alternativeName>
        <fullName>AIR synthase</fullName>
    </alternativeName>
    <alternativeName>
        <fullName>AIRS</fullName>
    </alternativeName>
    <alternativeName>
        <fullName>Phosphoribosyl-aminoimidazole synthetase</fullName>
    </alternativeName>
</protein>
<gene>
    <name type="primary">purM</name>
    <name type="synonym">purG</name>
    <name type="ordered locus">b2499</name>
    <name type="ordered locus">JW2484</name>
</gene>
<name>PUR5_ECOLI</name>
<evidence type="ECO:0000269" key="1">
    <source>
    </source>
</evidence>
<evidence type="ECO:0000269" key="2">
    <source>
    </source>
</evidence>
<evidence type="ECO:0000305" key="3"/>
<evidence type="ECO:0000305" key="4">
    <source>
    </source>
</evidence>
<evidence type="ECO:0007829" key="5">
    <source>
        <dbReference type="PDB" id="1CLI"/>
    </source>
</evidence>
<sequence>MTDKTSLSYKDAGVDIDAGNALVGRIKGVVKKTRRPEVMGGLGGFGALCALPQKYREPVLVSGTDGVGTKLRLAMDLKRHDTIGIDLVAMCVNDLVVQGAEPLFFLDYYATGKLDVDTASAVISGIAEGCLQSGCSLVGGETAEMPGMYHGEDYDVAGFCVGVVEKSEIIDGSKVSDGDVLIALGSSGPHSNGYSLVRKILEVSGCDPQTTELDGKPLADHLLAPTRIYVKSVLELIEKVDVHAIAHLTGGGFWENIPRVLPDNTQAVIDESSWQWPEVFNWLQTAGNVEHHEMYRTFNCGVGMIIALPAPEVDKALALLNANGENAWKIGIIKASDSEQRVVIE</sequence>
<proteinExistence type="evidence at protein level"/>
<feature type="initiator methionine" description="Removed" evidence="2">
    <location>
        <position position="1"/>
    </location>
</feature>
<feature type="chain" id="PRO_0000148211" description="Phosphoribosylformylglycinamidine cyclo-ligase">
    <location>
        <begin position="2"/>
        <end position="345"/>
    </location>
</feature>
<feature type="sequence conflict" description="In Ref. 5; AA sequence." evidence="3" ref="5">
    <original>A</original>
    <variation>D</variation>
    <location>
        <position position="12"/>
    </location>
</feature>
<feature type="turn" evidence="5">
    <location>
        <begin position="7"/>
        <end position="9"/>
    </location>
</feature>
<feature type="strand" evidence="5">
    <location>
        <begin position="10"/>
        <end position="12"/>
    </location>
</feature>
<feature type="helix" evidence="5">
    <location>
        <begin position="18"/>
        <end position="25"/>
    </location>
</feature>
<feature type="helix" evidence="5">
    <location>
        <begin position="27"/>
        <end position="31"/>
    </location>
</feature>
<feature type="strand" evidence="5">
    <location>
        <begin position="38"/>
        <end position="40"/>
    </location>
</feature>
<feature type="strand" evidence="5">
    <location>
        <begin position="42"/>
        <end position="50"/>
    </location>
</feature>
<feature type="strand" evidence="5">
    <location>
        <begin position="56"/>
        <end position="66"/>
    </location>
</feature>
<feature type="helix" evidence="5">
    <location>
        <begin position="70"/>
        <end position="76"/>
    </location>
</feature>
<feature type="helix" evidence="5">
    <location>
        <begin position="83"/>
        <end position="95"/>
    </location>
</feature>
<feature type="helix" evidence="5">
    <location>
        <begin position="96"/>
        <end position="98"/>
    </location>
</feature>
<feature type="strand" evidence="5">
    <location>
        <begin position="101"/>
        <end position="113"/>
    </location>
</feature>
<feature type="helix" evidence="5">
    <location>
        <begin position="116"/>
        <end position="133"/>
    </location>
</feature>
<feature type="strand" evidence="5">
    <location>
        <begin position="136"/>
        <end position="144"/>
    </location>
</feature>
<feature type="turn" evidence="5">
    <location>
        <begin position="146"/>
        <end position="148"/>
    </location>
</feature>
<feature type="strand" evidence="5">
    <location>
        <begin position="154"/>
        <end position="165"/>
    </location>
</feature>
<feature type="helix" evidence="5">
    <location>
        <begin position="166"/>
        <end position="168"/>
    </location>
</feature>
<feature type="strand" evidence="5">
    <location>
        <begin position="180"/>
        <end position="185"/>
    </location>
</feature>
<feature type="strand" evidence="5">
    <location>
        <begin position="187"/>
        <end position="189"/>
    </location>
</feature>
<feature type="helix" evidence="5">
    <location>
        <begin position="194"/>
        <end position="203"/>
    </location>
</feature>
<feature type="turn" evidence="5">
    <location>
        <begin position="208"/>
        <end position="210"/>
    </location>
</feature>
<feature type="strand" evidence="5">
    <location>
        <begin position="212"/>
        <end position="217"/>
    </location>
</feature>
<feature type="helix" evidence="5">
    <location>
        <begin position="218"/>
        <end position="223"/>
    </location>
</feature>
<feature type="helix" evidence="5">
    <location>
        <begin position="230"/>
        <end position="239"/>
    </location>
</feature>
<feature type="strand" evidence="5">
    <location>
        <begin position="244"/>
        <end position="247"/>
    </location>
</feature>
<feature type="helix" evidence="5">
    <location>
        <begin position="252"/>
        <end position="256"/>
    </location>
</feature>
<feature type="helix" evidence="5">
    <location>
        <begin position="257"/>
        <end position="259"/>
    </location>
</feature>
<feature type="strand" evidence="5">
    <location>
        <begin position="265"/>
        <end position="269"/>
    </location>
</feature>
<feature type="helix" evidence="5">
    <location>
        <begin position="271"/>
        <end position="273"/>
    </location>
</feature>
<feature type="helix" evidence="5">
    <location>
        <begin position="278"/>
        <end position="287"/>
    </location>
</feature>
<feature type="helix" evidence="5">
    <location>
        <begin position="291"/>
        <end position="297"/>
    </location>
</feature>
<feature type="strand" evidence="5">
    <location>
        <begin position="302"/>
        <end position="308"/>
    </location>
</feature>
<feature type="helix" evidence="5">
    <location>
        <begin position="310"/>
        <end position="312"/>
    </location>
</feature>
<feature type="helix" evidence="5">
    <location>
        <begin position="313"/>
        <end position="321"/>
    </location>
</feature>
<feature type="turn" evidence="5">
    <location>
        <begin position="322"/>
        <end position="324"/>
    </location>
</feature>
<feature type="strand" evidence="5">
    <location>
        <begin position="327"/>
        <end position="335"/>
    </location>
</feature>
<feature type="strand" evidence="5">
    <location>
        <begin position="340"/>
        <end position="343"/>
    </location>
</feature>
<accession>P08178</accession>
<dbReference type="EC" id="6.3.3.1" evidence="1"/>
<dbReference type="EMBL" id="M13747">
    <property type="protein sequence ID" value="AAA83898.1"/>
    <property type="molecule type" value="Genomic_DNA"/>
</dbReference>
<dbReference type="EMBL" id="U00096">
    <property type="protein sequence ID" value="AAC75552.1"/>
    <property type="molecule type" value="Genomic_DNA"/>
</dbReference>
<dbReference type="EMBL" id="AP009048">
    <property type="protein sequence ID" value="BAA16387.1"/>
    <property type="molecule type" value="Genomic_DNA"/>
</dbReference>
<dbReference type="PIR" id="A25955">
    <property type="entry name" value="AJECPC"/>
</dbReference>
<dbReference type="RefSeq" id="NP_416994.1">
    <property type="nucleotide sequence ID" value="NC_000913.3"/>
</dbReference>
<dbReference type="RefSeq" id="WP_001336050.1">
    <property type="nucleotide sequence ID" value="NZ_LN832404.1"/>
</dbReference>
<dbReference type="PDB" id="1CLI">
    <property type="method" value="X-ray"/>
    <property type="resolution" value="2.50 A"/>
    <property type="chains" value="A/B/C/D=2-345"/>
</dbReference>
<dbReference type="PDBsum" id="1CLI"/>
<dbReference type="SMR" id="P08178"/>
<dbReference type="BioGRID" id="4261439">
    <property type="interactions" value="60"/>
</dbReference>
<dbReference type="BioGRID" id="851314">
    <property type="interactions" value="4"/>
</dbReference>
<dbReference type="FunCoup" id="P08178">
    <property type="interactions" value="707"/>
</dbReference>
<dbReference type="IntAct" id="P08178">
    <property type="interactions" value="4"/>
</dbReference>
<dbReference type="STRING" id="511145.b2499"/>
<dbReference type="jPOST" id="P08178"/>
<dbReference type="PaxDb" id="511145-b2499"/>
<dbReference type="EnsemblBacteria" id="AAC75552">
    <property type="protein sequence ID" value="AAC75552"/>
    <property type="gene ID" value="b2499"/>
</dbReference>
<dbReference type="GeneID" id="946975"/>
<dbReference type="KEGG" id="ecj:JW2484"/>
<dbReference type="KEGG" id="eco:b2499"/>
<dbReference type="KEGG" id="ecoc:C3026_13860"/>
<dbReference type="PATRIC" id="fig|1411691.4.peg.4239"/>
<dbReference type="EchoBASE" id="EB0791"/>
<dbReference type="eggNOG" id="COG0150">
    <property type="taxonomic scope" value="Bacteria"/>
</dbReference>
<dbReference type="HOGENOM" id="CLU_047116_0_0_6"/>
<dbReference type="InParanoid" id="P08178"/>
<dbReference type="OMA" id="MTDYICV"/>
<dbReference type="OrthoDB" id="9777881at2"/>
<dbReference type="PhylomeDB" id="P08178"/>
<dbReference type="BioCyc" id="EcoCyc:AIRS-MONOMER"/>
<dbReference type="BioCyc" id="MetaCyc:AIRS-MONOMER"/>
<dbReference type="BRENDA" id="6.3.3.1">
    <property type="organism ID" value="2026"/>
</dbReference>
<dbReference type="SABIO-RK" id="P08178"/>
<dbReference type="UniPathway" id="UPA00074">
    <property type="reaction ID" value="UER00129"/>
</dbReference>
<dbReference type="EvolutionaryTrace" id="P08178"/>
<dbReference type="PRO" id="PR:P08178"/>
<dbReference type="Proteomes" id="UP000000625">
    <property type="component" value="Chromosome"/>
</dbReference>
<dbReference type="GO" id="GO:0005829">
    <property type="term" value="C:cytosol"/>
    <property type="evidence" value="ECO:0000314"/>
    <property type="project" value="EcoCyc"/>
</dbReference>
<dbReference type="GO" id="GO:0005524">
    <property type="term" value="F:ATP binding"/>
    <property type="evidence" value="ECO:0007669"/>
    <property type="project" value="UniProtKB-KW"/>
</dbReference>
<dbReference type="GO" id="GO:0004637">
    <property type="term" value="F:phosphoribosylamine-glycine ligase activity"/>
    <property type="evidence" value="ECO:0000318"/>
    <property type="project" value="GO_Central"/>
</dbReference>
<dbReference type="GO" id="GO:0004641">
    <property type="term" value="F:phosphoribosylformylglycinamidine cyclo-ligase activity"/>
    <property type="evidence" value="ECO:0000314"/>
    <property type="project" value="EcoCyc"/>
</dbReference>
<dbReference type="GO" id="GO:0006189">
    <property type="term" value="P:'de novo' IMP biosynthetic process"/>
    <property type="evidence" value="ECO:0007669"/>
    <property type="project" value="UniProtKB-UniRule"/>
</dbReference>
<dbReference type="GO" id="GO:0046084">
    <property type="term" value="P:adenine biosynthetic process"/>
    <property type="evidence" value="ECO:0000318"/>
    <property type="project" value="GO_Central"/>
</dbReference>
<dbReference type="GO" id="GO:0006164">
    <property type="term" value="P:purine nucleotide biosynthetic process"/>
    <property type="evidence" value="ECO:0000318"/>
    <property type="project" value="GO_Central"/>
</dbReference>
<dbReference type="CDD" id="cd02196">
    <property type="entry name" value="PurM"/>
    <property type="match status" value="1"/>
</dbReference>
<dbReference type="FunFam" id="3.30.1330.10:FF:000001">
    <property type="entry name" value="Phosphoribosylformylglycinamidine cyclo-ligase"/>
    <property type="match status" value="1"/>
</dbReference>
<dbReference type="FunFam" id="3.90.650.10:FF:000001">
    <property type="entry name" value="Phosphoribosylformylglycinamidine cyclo-ligase"/>
    <property type="match status" value="1"/>
</dbReference>
<dbReference type="Gene3D" id="3.90.650.10">
    <property type="entry name" value="PurM-like C-terminal domain"/>
    <property type="match status" value="1"/>
</dbReference>
<dbReference type="Gene3D" id="3.30.1330.10">
    <property type="entry name" value="PurM-like, N-terminal domain"/>
    <property type="match status" value="1"/>
</dbReference>
<dbReference type="HAMAP" id="MF_00741">
    <property type="entry name" value="AIRS"/>
    <property type="match status" value="1"/>
</dbReference>
<dbReference type="InterPro" id="IPR010918">
    <property type="entry name" value="PurM-like_C_dom"/>
</dbReference>
<dbReference type="InterPro" id="IPR036676">
    <property type="entry name" value="PurM-like_C_sf"/>
</dbReference>
<dbReference type="InterPro" id="IPR016188">
    <property type="entry name" value="PurM-like_N"/>
</dbReference>
<dbReference type="InterPro" id="IPR036921">
    <property type="entry name" value="PurM-like_N_sf"/>
</dbReference>
<dbReference type="InterPro" id="IPR004733">
    <property type="entry name" value="PurM_cligase"/>
</dbReference>
<dbReference type="NCBIfam" id="TIGR00878">
    <property type="entry name" value="purM"/>
    <property type="match status" value="1"/>
</dbReference>
<dbReference type="PANTHER" id="PTHR10520:SF12">
    <property type="entry name" value="TRIFUNCTIONAL PURINE BIOSYNTHETIC PROTEIN ADENOSINE-3"/>
    <property type="match status" value="1"/>
</dbReference>
<dbReference type="PANTHER" id="PTHR10520">
    <property type="entry name" value="TRIFUNCTIONAL PURINE BIOSYNTHETIC PROTEIN ADENOSINE-3-RELATED"/>
    <property type="match status" value="1"/>
</dbReference>
<dbReference type="Pfam" id="PF00586">
    <property type="entry name" value="AIRS"/>
    <property type="match status" value="1"/>
</dbReference>
<dbReference type="Pfam" id="PF02769">
    <property type="entry name" value="AIRS_C"/>
    <property type="match status" value="1"/>
</dbReference>
<dbReference type="SUPFAM" id="SSF56042">
    <property type="entry name" value="PurM C-terminal domain-like"/>
    <property type="match status" value="1"/>
</dbReference>
<dbReference type="SUPFAM" id="SSF55326">
    <property type="entry name" value="PurM N-terminal domain-like"/>
    <property type="match status" value="1"/>
</dbReference>